<name>PYRC_RHIR8</name>
<gene>
    <name evidence="1" type="primary">pyrC</name>
    <name type="ordered locus">Arad_0740</name>
</gene>
<proteinExistence type="inferred from homology"/>
<keyword id="KW-0378">Hydrolase</keyword>
<keyword id="KW-0479">Metal-binding</keyword>
<keyword id="KW-0665">Pyrimidine biosynthesis</keyword>
<keyword id="KW-0862">Zinc</keyword>
<sequence>MQKLTIRRPDDWHLHLRDGAMLEGVIGDTSRHFARAIIMPNLVPPVVTTADATAYRERILKALPAGDRFQPLMTLYLTEHTNPDDVEEGKKSGLITAVKLYPAGATTNSHGGVRNLDKAMPTLERMAKIGLPLCVHGEVTTPEVDIFDREAVFIETVLDPLRQRLPELKVTMEHVTTSDGIDYIKSAKANLAGSITTHHLIINRNAILVGGIRPHYYCLPVAKRESHRLALRAAATSGDSRFFLGTDSAPHVDPLKECACGCAGIYTSINTMSCLAHVFEQDGALDKLEAFASLNGPAWYGLAPNEERITLIRRVESVTFPEKIETGAGTVTVFDPMFPLHWDVEG</sequence>
<accession>B9J8H5</accession>
<organism>
    <name type="scientific">Rhizobium rhizogenes (strain K84 / ATCC BAA-868)</name>
    <name type="common">Agrobacterium radiobacter</name>
    <dbReference type="NCBI Taxonomy" id="311403"/>
    <lineage>
        <taxon>Bacteria</taxon>
        <taxon>Pseudomonadati</taxon>
        <taxon>Pseudomonadota</taxon>
        <taxon>Alphaproteobacteria</taxon>
        <taxon>Hyphomicrobiales</taxon>
        <taxon>Rhizobiaceae</taxon>
        <taxon>Rhizobium/Agrobacterium group</taxon>
        <taxon>Rhizobium</taxon>
    </lineage>
</organism>
<dbReference type="EC" id="3.5.2.3" evidence="1"/>
<dbReference type="EMBL" id="CP000628">
    <property type="protein sequence ID" value="ACM25362.1"/>
    <property type="molecule type" value="Genomic_DNA"/>
</dbReference>
<dbReference type="RefSeq" id="WP_007695518.1">
    <property type="nucleotide sequence ID" value="NC_011985.1"/>
</dbReference>
<dbReference type="SMR" id="B9J8H5"/>
<dbReference type="STRING" id="311403.Arad_0740"/>
<dbReference type="MEROPS" id="M38.A02"/>
<dbReference type="GeneID" id="86847178"/>
<dbReference type="KEGG" id="ara:Arad_0740"/>
<dbReference type="eggNOG" id="COG0418">
    <property type="taxonomic scope" value="Bacteria"/>
</dbReference>
<dbReference type="HOGENOM" id="CLU_041558_1_0_5"/>
<dbReference type="UniPathway" id="UPA00070">
    <property type="reaction ID" value="UER00117"/>
</dbReference>
<dbReference type="Proteomes" id="UP000001600">
    <property type="component" value="Chromosome 1"/>
</dbReference>
<dbReference type="GO" id="GO:0005829">
    <property type="term" value="C:cytosol"/>
    <property type="evidence" value="ECO:0007669"/>
    <property type="project" value="TreeGrafter"/>
</dbReference>
<dbReference type="GO" id="GO:0004151">
    <property type="term" value="F:dihydroorotase activity"/>
    <property type="evidence" value="ECO:0007669"/>
    <property type="project" value="UniProtKB-UniRule"/>
</dbReference>
<dbReference type="GO" id="GO:0008270">
    <property type="term" value="F:zinc ion binding"/>
    <property type="evidence" value="ECO:0007669"/>
    <property type="project" value="UniProtKB-UniRule"/>
</dbReference>
<dbReference type="GO" id="GO:0006207">
    <property type="term" value="P:'de novo' pyrimidine nucleobase biosynthetic process"/>
    <property type="evidence" value="ECO:0007669"/>
    <property type="project" value="TreeGrafter"/>
</dbReference>
<dbReference type="GO" id="GO:0044205">
    <property type="term" value="P:'de novo' UMP biosynthetic process"/>
    <property type="evidence" value="ECO:0007669"/>
    <property type="project" value="UniProtKB-UniRule"/>
</dbReference>
<dbReference type="CDD" id="cd01294">
    <property type="entry name" value="DHOase"/>
    <property type="match status" value="1"/>
</dbReference>
<dbReference type="Gene3D" id="3.20.20.140">
    <property type="entry name" value="Metal-dependent hydrolases"/>
    <property type="match status" value="1"/>
</dbReference>
<dbReference type="HAMAP" id="MF_00219">
    <property type="entry name" value="PyrC_classII"/>
    <property type="match status" value="1"/>
</dbReference>
<dbReference type="InterPro" id="IPR006680">
    <property type="entry name" value="Amidohydro-rel"/>
</dbReference>
<dbReference type="InterPro" id="IPR004721">
    <property type="entry name" value="DHOdimr"/>
</dbReference>
<dbReference type="InterPro" id="IPR002195">
    <property type="entry name" value="Dihydroorotase_CS"/>
</dbReference>
<dbReference type="InterPro" id="IPR032466">
    <property type="entry name" value="Metal_Hydrolase"/>
</dbReference>
<dbReference type="NCBIfam" id="TIGR00856">
    <property type="entry name" value="pyrC_dimer"/>
    <property type="match status" value="1"/>
</dbReference>
<dbReference type="PANTHER" id="PTHR43137">
    <property type="entry name" value="DIHYDROOROTASE"/>
    <property type="match status" value="1"/>
</dbReference>
<dbReference type="PANTHER" id="PTHR43137:SF1">
    <property type="entry name" value="DIHYDROOROTASE"/>
    <property type="match status" value="1"/>
</dbReference>
<dbReference type="Pfam" id="PF01979">
    <property type="entry name" value="Amidohydro_1"/>
    <property type="match status" value="1"/>
</dbReference>
<dbReference type="PIRSF" id="PIRSF001237">
    <property type="entry name" value="DHOdimr"/>
    <property type="match status" value="1"/>
</dbReference>
<dbReference type="SUPFAM" id="SSF51556">
    <property type="entry name" value="Metallo-dependent hydrolases"/>
    <property type="match status" value="1"/>
</dbReference>
<dbReference type="PROSITE" id="PS00482">
    <property type="entry name" value="DIHYDROOROTASE_1"/>
    <property type="match status" value="1"/>
</dbReference>
<dbReference type="PROSITE" id="PS00483">
    <property type="entry name" value="DIHYDROOROTASE_2"/>
    <property type="match status" value="1"/>
</dbReference>
<feature type="chain" id="PRO_1000193065" description="Dihydroorotase">
    <location>
        <begin position="1"/>
        <end position="346"/>
    </location>
</feature>
<feature type="active site" evidence="1">
    <location>
        <position position="247"/>
    </location>
</feature>
<feature type="binding site" evidence="1">
    <location>
        <position position="13"/>
    </location>
    <ligand>
        <name>Zn(2+)</name>
        <dbReference type="ChEBI" id="CHEBI:29105"/>
        <label>1</label>
    </ligand>
</feature>
<feature type="binding site" evidence="1">
    <location>
        <begin position="15"/>
        <end position="17"/>
    </location>
    <ligand>
        <name>substrate</name>
    </ligand>
</feature>
<feature type="binding site" evidence="1">
    <location>
        <position position="15"/>
    </location>
    <ligand>
        <name>Zn(2+)</name>
        <dbReference type="ChEBI" id="CHEBI:29105"/>
        <label>1</label>
    </ligand>
</feature>
<feature type="binding site" evidence="1">
    <location>
        <position position="41"/>
    </location>
    <ligand>
        <name>substrate</name>
    </ligand>
</feature>
<feature type="binding site" description="via carbamate group" evidence="1">
    <location>
        <position position="99"/>
    </location>
    <ligand>
        <name>Zn(2+)</name>
        <dbReference type="ChEBI" id="CHEBI:29105"/>
        <label>1</label>
    </ligand>
</feature>
<feature type="binding site" description="via carbamate group" evidence="1">
    <location>
        <position position="99"/>
    </location>
    <ligand>
        <name>Zn(2+)</name>
        <dbReference type="ChEBI" id="CHEBI:29105"/>
        <label>2</label>
    </ligand>
</feature>
<feature type="binding site" evidence="1">
    <location>
        <position position="136"/>
    </location>
    <ligand>
        <name>substrate</name>
    </ligand>
</feature>
<feature type="binding site" evidence="1">
    <location>
        <position position="136"/>
    </location>
    <ligand>
        <name>Zn(2+)</name>
        <dbReference type="ChEBI" id="CHEBI:29105"/>
        <label>2</label>
    </ligand>
</feature>
<feature type="binding site" evidence="1">
    <location>
        <position position="174"/>
    </location>
    <ligand>
        <name>Zn(2+)</name>
        <dbReference type="ChEBI" id="CHEBI:29105"/>
        <label>2</label>
    </ligand>
</feature>
<feature type="binding site" evidence="1">
    <location>
        <position position="219"/>
    </location>
    <ligand>
        <name>substrate</name>
    </ligand>
</feature>
<feature type="binding site" evidence="1">
    <location>
        <position position="247"/>
    </location>
    <ligand>
        <name>Zn(2+)</name>
        <dbReference type="ChEBI" id="CHEBI:29105"/>
        <label>1</label>
    </ligand>
</feature>
<feature type="binding site" evidence="1">
    <location>
        <position position="251"/>
    </location>
    <ligand>
        <name>substrate</name>
    </ligand>
</feature>
<feature type="binding site" evidence="1">
    <location>
        <position position="263"/>
    </location>
    <ligand>
        <name>substrate</name>
    </ligand>
</feature>
<feature type="modified residue" description="N6-carboxylysine" evidence="1">
    <location>
        <position position="99"/>
    </location>
</feature>
<protein>
    <recommendedName>
        <fullName evidence="1">Dihydroorotase</fullName>
        <shortName evidence="1">DHOase</shortName>
        <ecNumber evidence="1">3.5.2.3</ecNumber>
    </recommendedName>
</protein>
<comment type="function">
    <text evidence="1">Catalyzes the reversible cyclization of carbamoyl aspartate to dihydroorotate.</text>
</comment>
<comment type="catalytic activity">
    <reaction evidence="1">
        <text>(S)-dihydroorotate + H2O = N-carbamoyl-L-aspartate + H(+)</text>
        <dbReference type="Rhea" id="RHEA:24296"/>
        <dbReference type="ChEBI" id="CHEBI:15377"/>
        <dbReference type="ChEBI" id="CHEBI:15378"/>
        <dbReference type="ChEBI" id="CHEBI:30864"/>
        <dbReference type="ChEBI" id="CHEBI:32814"/>
        <dbReference type="EC" id="3.5.2.3"/>
    </reaction>
</comment>
<comment type="cofactor">
    <cofactor evidence="1">
        <name>Zn(2+)</name>
        <dbReference type="ChEBI" id="CHEBI:29105"/>
    </cofactor>
    <text evidence="1">Binds 2 Zn(2+) ions per subunit.</text>
</comment>
<comment type="pathway">
    <text evidence="1">Pyrimidine metabolism; UMP biosynthesis via de novo pathway; (S)-dihydroorotate from bicarbonate: step 3/3.</text>
</comment>
<comment type="subunit">
    <text evidence="1">Homodimer.</text>
</comment>
<comment type="similarity">
    <text evidence="1">Belongs to the metallo-dependent hydrolases superfamily. DHOase family. Class II DHOase subfamily.</text>
</comment>
<evidence type="ECO:0000255" key="1">
    <source>
        <dbReference type="HAMAP-Rule" id="MF_00219"/>
    </source>
</evidence>
<reference key="1">
    <citation type="journal article" date="2009" name="J. Bacteriol.">
        <title>Genome sequences of three Agrobacterium biovars help elucidate the evolution of multichromosome genomes in bacteria.</title>
        <authorList>
            <person name="Slater S.C."/>
            <person name="Goldman B.S."/>
            <person name="Goodner B."/>
            <person name="Setubal J.C."/>
            <person name="Farrand S.K."/>
            <person name="Nester E.W."/>
            <person name="Burr T.J."/>
            <person name="Banta L."/>
            <person name="Dickerman A.W."/>
            <person name="Paulsen I."/>
            <person name="Otten L."/>
            <person name="Suen G."/>
            <person name="Welch R."/>
            <person name="Almeida N.F."/>
            <person name="Arnold F."/>
            <person name="Burton O.T."/>
            <person name="Du Z."/>
            <person name="Ewing A."/>
            <person name="Godsy E."/>
            <person name="Heisel S."/>
            <person name="Houmiel K.L."/>
            <person name="Jhaveri J."/>
            <person name="Lu J."/>
            <person name="Miller N.M."/>
            <person name="Norton S."/>
            <person name="Chen Q."/>
            <person name="Phoolcharoen W."/>
            <person name="Ohlin V."/>
            <person name="Ondrusek D."/>
            <person name="Pride N."/>
            <person name="Stricklin S.L."/>
            <person name="Sun J."/>
            <person name="Wheeler C."/>
            <person name="Wilson L."/>
            <person name="Zhu H."/>
            <person name="Wood D.W."/>
        </authorList>
    </citation>
    <scope>NUCLEOTIDE SEQUENCE [LARGE SCALE GENOMIC DNA]</scope>
    <source>
        <strain>K84 / ATCC BAA-868</strain>
    </source>
</reference>